<feature type="transit peptide" description="Mitochondrion" evidence="2">
    <location>
        <begin position="1"/>
        <end position="19"/>
    </location>
</feature>
<feature type="chain" id="PRO_0000406665" description="MICOS complex subunit MIC60">
    <location>
        <begin position="20"/>
        <end position="685"/>
    </location>
</feature>
<feature type="topological domain" description="Mitochondrial matrix" evidence="2">
    <location>
        <begin position="20"/>
        <end position="149"/>
    </location>
</feature>
<feature type="transmembrane region" description="Helical" evidence="2">
    <location>
        <begin position="150"/>
        <end position="169"/>
    </location>
</feature>
<feature type="topological domain" description="Mitochondrial intermembrane" evidence="2">
    <location>
        <begin position="170"/>
        <end position="685"/>
    </location>
</feature>
<feature type="region of interest" description="Disordered" evidence="3">
    <location>
        <begin position="49"/>
        <end position="144"/>
    </location>
</feature>
<feature type="region of interest" description="Disordered" evidence="3">
    <location>
        <begin position="209"/>
        <end position="305"/>
    </location>
</feature>
<feature type="coiled-coil region" evidence="2">
    <location>
        <begin position="356"/>
        <end position="456"/>
    </location>
</feature>
<feature type="compositionally biased region" description="Low complexity" evidence="3">
    <location>
        <begin position="51"/>
        <end position="67"/>
    </location>
</feature>
<feature type="compositionally biased region" description="Polar residues" evidence="3">
    <location>
        <begin position="68"/>
        <end position="99"/>
    </location>
</feature>
<feature type="compositionally biased region" description="Pro residues" evidence="3">
    <location>
        <begin position="124"/>
        <end position="142"/>
    </location>
</feature>
<feature type="compositionally biased region" description="Basic and acidic residues" evidence="3">
    <location>
        <begin position="259"/>
        <end position="271"/>
    </location>
</feature>
<reference key="1">
    <citation type="journal article" date="2011" name="PLoS Genet.">
        <title>Comparative genomic analysis of human fungal pathogens causing paracoccidioidomycosis.</title>
        <authorList>
            <person name="Desjardins C.A."/>
            <person name="Champion M.D."/>
            <person name="Holder J.W."/>
            <person name="Muszewska A."/>
            <person name="Goldberg J."/>
            <person name="Bailao A.M."/>
            <person name="Brigido M.M."/>
            <person name="Ferreira M.E."/>
            <person name="Garcia A.M."/>
            <person name="Grynberg M."/>
            <person name="Gujja S."/>
            <person name="Heiman D.I."/>
            <person name="Henn M.R."/>
            <person name="Kodira C.D."/>
            <person name="Leon-Narvaez H."/>
            <person name="Longo L.V.G."/>
            <person name="Ma L.-J."/>
            <person name="Malavazi I."/>
            <person name="Matsuo A.L."/>
            <person name="Morais F.V."/>
            <person name="Pereira M."/>
            <person name="Rodriguez-Brito S."/>
            <person name="Sakthikumar S."/>
            <person name="Salem-Izacc S.M."/>
            <person name="Sykes S.M."/>
            <person name="Teixeira M.M."/>
            <person name="Vallejo M.C."/>
            <person name="Walter M.E."/>
            <person name="Yandava C."/>
            <person name="Young S."/>
            <person name="Zeng Q."/>
            <person name="Zucker J."/>
            <person name="Felipe M.S."/>
            <person name="Goldman G.H."/>
            <person name="Haas B.J."/>
            <person name="McEwen J.G."/>
            <person name="Nino-Vega G."/>
            <person name="Puccia R."/>
            <person name="San-Blas G."/>
            <person name="Soares C.M."/>
            <person name="Birren B.W."/>
            <person name="Cuomo C.A."/>
        </authorList>
    </citation>
    <scope>NUCLEOTIDE SEQUENCE [LARGE SCALE GENOMIC DNA]</scope>
    <source>
        <strain>Pb03</strain>
    </source>
</reference>
<name>MIC60_PARBP</name>
<dbReference type="EMBL" id="KN305531">
    <property type="protein sequence ID" value="EEH18043.2"/>
    <property type="molecule type" value="Genomic_DNA"/>
</dbReference>
<dbReference type="SMR" id="C0RYV1"/>
<dbReference type="VEuPathDB" id="FungiDB:PABG_00606"/>
<dbReference type="HOGENOM" id="CLU_008024_1_2_1"/>
<dbReference type="OrthoDB" id="39042at33183"/>
<dbReference type="GO" id="GO:0061617">
    <property type="term" value="C:MICOS complex"/>
    <property type="evidence" value="ECO:0007669"/>
    <property type="project" value="TreeGrafter"/>
</dbReference>
<dbReference type="GO" id="GO:0042407">
    <property type="term" value="P:cristae formation"/>
    <property type="evidence" value="ECO:0007669"/>
    <property type="project" value="TreeGrafter"/>
</dbReference>
<dbReference type="InterPro" id="IPR019133">
    <property type="entry name" value="MIC60"/>
</dbReference>
<dbReference type="PANTHER" id="PTHR15415:SF7">
    <property type="entry name" value="MICOS COMPLEX SUBUNIT MIC60"/>
    <property type="match status" value="1"/>
</dbReference>
<dbReference type="PANTHER" id="PTHR15415">
    <property type="entry name" value="MITOFILIN"/>
    <property type="match status" value="1"/>
</dbReference>
<dbReference type="Pfam" id="PF09731">
    <property type="entry name" value="Mitofilin"/>
    <property type="match status" value="2"/>
</dbReference>
<sequence>MLRTSIATSRQLLSSPVCPKASAQWLRSSNAGRANTTTRRYYAIQQEPNGALRSSLSPSAAAVSDVSQRASNSTNTKRPNTSDLNVRSPASPSTGSTLKPETVLVAPVSPLRQGQSSPGSAAPAPEPAAAPPPSPPPPPPAPKTGRLRKFLLYLFLTTGLAYAGGVWYSLRSDNFYDFFTEYAPYGENAVIYLEERDFRNRFPNATKKNNRRAVAPRDEGAQVTIPGGSGLSWKVAEEQQEGSDISKKGPHMSAVDNNKATKDTKTVEKTKGGVTSKSPAQKEEAVMTKPAPEGVKTQPAKVAETPREPAIPAITTIDHLVLNTEDEPVVQDLVKVFNDIITVISADAPSSFSGPVAKAKEELEKIGKRILALKSDAQASAQKEINDAHASFDKSAANLIRHIDEMRAEDATKFREEFEAERERIAQSYQEKINTELQRAHEVAEQRLRNELVEQAIELNRKFLSDVKNLVEHERESRLSKLAELVSSVAELERLTAGWSDVIDINLKTQQLQVAVDAVRTTLENSNVPRPFIRELAAVKELASNDEVVSAAIDSISPVAYQRGIPSSAHLVDRFRRVATEVRKASLLPENAGITSHAASFVLNKVMLKKHGSPAGNDVESTLTRAENFLEEGNLDEAAREMNSLKGWAKLLSKDWLADVRRVLEVKQALEVIETEARLRCLQVE</sequence>
<accession>C0RYV1</accession>
<proteinExistence type="inferred from homology"/>
<protein>
    <recommendedName>
        <fullName>MICOS complex subunit MIC60</fullName>
    </recommendedName>
    <alternativeName>
        <fullName>Mitofilin</fullName>
    </alternativeName>
</protein>
<evidence type="ECO:0000250" key="1"/>
<evidence type="ECO:0000255" key="2"/>
<evidence type="ECO:0000256" key="3">
    <source>
        <dbReference type="SAM" id="MobiDB-lite"/>
    </source>
</evidence>
<evidence type="ECO:0000305" key="4"/>
<gene>
    <name type="primary">MIC60</name>
    <name type="ORF">PABG_00606</name>
</gene>
<keyword id="KW-0175">Coiled coil</keyword>
<keyword id="KW-0472">Membrane</keyword>
<keyword id="KW-0496">Mitochondrion</keyword>
<keyword id="KW-0999">Mitochondrion inner membrane</keyword>
<keyword id="KW-0809">Transit peptide</keyword>
<keyword id="KW-0812">Transmembrane</keyword>
<keyword id="KW-1133">Transmembrane helix</keyword>
<comment type="function">
    <text evidence="1">Component of the MICOS complex, a large protein complex of the mitochondrial inner membrane that plays crucial roles in the maintenance of crista junctions, inner membrane architecture, and formation of contact sites to the outer membrane. Plays a role in keeping cristae membranes connected to the inner boundary membrane. Also promotes protein import via the mitochondrial intermembrane space assembly (MIA) pathway (By similarity).</text>
</comment>
<comment type="subunit">
    <text evidence="1">Component of the mitochondrial contact site and cristae organizing system (MICOS) complex.</text>
</comment>
<comment type="subcellular location">
    <subcellularLocation>
        <location evidence="1">Mitochondrion inner membrane</location>
        <topology evidence="1">Single-pass membrane protein</topology>
    </subcellularLocation>
</comment>
<comment type="similarity">
    <text evidence="4">Belongs to the MICOS complex subunit Mic60 family.</text>
</comment>
<organism>
    <name type="scientific">Paracoccidioides brasiliensis (strain Pb03)</name>
    <dbReference type="NCBI Taxonomy" id="482561"/>
    <lineage>
        <taxon>Eukaryota</taxon>
        <taxon>Fungi</taxon>
        <taxon>Dikarya</taxon>
        <taxon>Ascomycota</taxon>
        <taxon>Pezizomycotina</taxon>
        <taxon>Eurotiomycetes</taxon>
        <taxon>Eurotiomycetidae</taxon>
        <taxon>Onygenales</taxon>
        <taxon>Ajellomycetaceae</taxon>
        <taxon>Paracoccidioides</taxon>
    </lineage>
</organism>